<name>CRIP2_HUMAN</name>
<keyword id="KW-0002">3D-structure</keyword>
<keyword id="KW-0007">Acetylation</keyword>
<keyword id="KW-0025">Alternative splicing</keyword>
<keyword id="KW-0440">LIM domain</keyword>
<keyword id="KW-0479">Metal-binding</keyword>
<keyword id="KW-0597">Phosphoprotein</keyword>
<keyword id="KW-1267">Proteomics identification</keyword>
<keyword id="KW-1185">Reference proteome</keyword>
<keyword id="KW-0677">Repeat</keyword>
<keyword id="KW-0862">Zinc</keyword>
<evidence type="ECO:0000250" key="1"/>
<evidence type="ECO:0000250" key="2">
    <source>
        <dbReference type="UniProtKB" id="Q9DCT8"/>
    </source>
</evidence>
<evidence type="ECO:0000255" key="3">
    <source>
        <dbReference type="PROSITE-ProRule" id="PRU00125"/>
    </source>
</evidence>
<evidence type="ECO:0000256" key="4">
    <source>
        <dbReference type="SAM" id="MobiDB-lite"/>
    </source>
</evidence>
<evidence type="ECO:0000303" key="5">
    <source>
    </source>
</evidence>
<evidence type="ECO:0007744" key="6">
    <source>
    </source>
</evidence>
<evidence type="ECO:0007744" key="7">
    <source>
    </source>
</evidence>
<evidence type="ECO:0007829" key="8">
    <source>
        <dbReference type="PDB" id="2CU8"/>
    </source>
</evidence>
<accession>P52943</accession>
<accession>A1A4U1</accession>
<accession>B7Z6C0</accession>
<accession>E9PD13</accession>
<protein>
    <recommendedName>
        <fullName>Cysteine-rich protein 2</fullName>
        <shortName>CRP-2</shortName>
    </recommendedName>
    <alternativeName>
        <fullName>Protein ESP1</fullName>
    </alternativeName>
</protein>
<proteinExistence type="evidence at protein level"/>
<dbReference type="EMBL" id="D42123">
    <property type="protein sequence ID" value="BAA07703.1"/>
    <property type="molecule type" value="mRNA"/>
</dbReference>
<dbReference type="EMBL" id="U36190">
    <property type="protein sequence ID" value="AAB03194.1"/>
    <property type="molecule type" value="mRNA"/>
</dbReference>
<dbReference type="EMBL" id="BT019911">
    <property type="protein sequence ID" value="AAV38714.1"/>
    <property type="molecule type" value="mRNA"/>
</dbReference>
<dbReference type="EMBL" id="AK300092">
    <property type="protein sequence ID" value="BAH13206.1"/>
    <property type="molecule type" value="mRNA"/>
</dbReference>
<dbReference type="EMBL" id="AK315757">
    <property type="protein sequence ID" value="BAG38110.1"/>
    <property type="molecule type" value="mRNA"/>
</dbReference>
<dbReference type="EMBL" id="AL928654">
    <property type="status" value="NOT_ANNOTATED_CDS"/>
    <property type="molecule type" value="Genomic_DNA"/>
</dbReference>
<dbReference type="EMBL" id="BC000434">
    <property type="protein sequence ID" value="AAH00434.1"/>
    <property type="molecule type" value="mRNA"/>
</dbReference>
<dbReference type="EMBL" id="BC001931">
    <property type="protein sequence ID" value="AAH01931.1"/>
    <property type="molecule type" value="mRNA"/>
</dbReference>
<dbReference type="EMBL" id="BC034151">
    <property type="protein sequence ID" value="AAH34151.1"/>
    <property type="molecule type" value="mRNA"/>
</dbReference>
<dbReference type="EMBL" id="BC128101">
    <property type="protein sequence ID" value="AAI28102.1"/>
    <property type="molecule type" value="mRNA"/>
</dbReference>
<dbReference type="CCDS" id="CCDS10003.1">
    <molecule id="P52943-1"/>
</dbReference>
<dbReference type="CCDS" id="CCDS59246.1">
    <molecule id="P52943-2"/>
</dbReference>
<dbReference type="PIR" id="G02090">
    <property type="entry name" value="G02090"/>
</dbReference>
<dbReference type="RefSeq" id="NP_001257766.1">
    <molecule id="P52943-2"/>
    <property type="nucleotide sequence ID" value="NM_001270837.2"/>
</dbReference>
<dbReference type="RefSeq" id="NP_001257770.1">
    <property type="nucleotide sequence ID" value="NM_001270841.1"/>
</dbReference>
<dbReference type="RefSeq" id="NP_001303.1">
    <molecule id="P52943-1"/>
    <property type="nucleotide sequence ID" value="NM_001312.4"/>
</dbReference>
<dbReference type="PDB" id="2CU8">
    <property type="method" value="NMR"/>
    <property type="chains" value="A=1-63"/>
</dbReference>
<dbReference type="PDBsum" id="2CU8"/>
<dbReference type="SMR" id="P52943"/>
<dbReference type="BioGRID" id="107787">
    <property type="interactions" value="45"/>
</dbReference>
<dbReference type="DIP" id="DIP-49905N"/>
<dbReference type="FunCoup" id="P52943">
    <property type="interactions" value="103"/>
</dbReference>
<dbReference type="IntAct" id="P52943">
    <property type="interactions" value="24"/>
</dbReference>
<dbReference type="MINT" id="P52943"/>
<dbReference type="STRING" id="9606.ENSP00000426119"/>
<dbReference type="GlyGen" id="P52943">
    <property type="glycosylation" value="2 sites, 1 O-linked glycan (2 sites)"/>
</dbReference>
<dbReference type="iPTMnet" id="P52943"/>
<dbReference type="PhosphoSitePlus" id="P52943"/>
<dbReference type="SwissPalm" id="P52943"/>
<dbReference type="BioMuta" id="CRIP2"/>
<dbReference type="DMDM" id="1706133"/>
<dbReference type="jPOST" id="P52943"/>
<dbReference type="MassIVE" id="P52943"/>
<dbReference type="PaxDb" id="9606-ENSP00000426119"/>
<dbReference type="PeptideAtlas" id="P52943"/>
<dbReference type="ProteomicsDB" id="56553">
    <molecule id="P52943-1"/>
</dbReference>
<dbReference type="ProteomicsDB" id="6770"/>
<dbReference type="Pumba" id="P52943"/>
<dbReference type="Antibodypedia" id="15064">
    <property type="antibodies" value="214 antibodies from 28 providers"/>
</dbReference>
<dbReference type="DNASU" id="1397"/>
<dbReference type="Ensembl" id="ENST00000329146.9">
    <molecule id="P52943-1"/>
    <property type="protein sequence ID" value="ENSP00000328521.5"/>
    <property type="gene ID" value="ENSG00000182809.11"/>
</dbReference>
<dbReference type="Ensembl" id="ENST00000483017.7">
    <molecule id="P52943-2"/>
    <property type="protein sequence ID" value="ENSP00000426119.2"/>
    <property type="gene ID" value="ENSG00000182809.11"/>
</dbReference>
<dbReference type="GeneID" id="1397"/>
<dbReference type="KEGG" id="hsa:1397"/>
<dbReference type="MANE-Select" id="ENST00000329146.9">
    <property type="protein sequence ID" value="ENSP00000328521.5"/>
    <property type="RefSeq nucleotide sequence ID" value="NM_001312.4"/>
    <property type="RefSeq protein sequence ID" value="NP_001303.1"/>
</dbReference>
<dbReference type="UCSC" id="uc001yrd.3">
    <molecule id="P52943-1"/>
    <property type="organism name" value="human"/>
</dbReference>
<dbReference type="AGR" id="HGNC:2361"/>
<dbReference type="CTD" id="1397"/>
<dbReference type="DisGeNET" id="1397"/>
<dbReference type="GeneCards" id="CRIP2"/>
<dbReference type="HGNC" id="HGNC:2361">
    <property type="gene designation" value="CRIP2"/>
</dbReference>
<dbReference type="HPA" id="ENSG00000182809">
    <property type="expression patterns" value="Tissue enriched (heart)"/>
</dbReference>
<dbReference type="MIM" id="601183">
    <property type="type" value="gene"/>
</dbReference>
<dbReference type="neXtProt" id="NX_P52943"/>
<dbReference type="OpenTargets" id="ENSG00000182809"/>
<dbReference type="PharmGKB" id="PA26879"/>
<dbReference type="VEuPathDB" id="HostDB:ENSG00000182809"/>
<dbReference type="eggNOG" id="KOG1700">
    <property type="taxonomic scope" value="Eukaryota"/>
</dbReference>
<dbReference type="GeneTree" id="ENSGT00940000158683"/>
<dbReference type="HOGENOM" id="CLU_054591_2_0_1"/>
<dbReference type="InParanoid" id="P52943"/>
<dbReference type="OMA" id="YEKPCAE"/>
<dbReference type="OrthoDB" id="1679758at2759"/>
<dbReference type="PAN-GO" id="P52943">
    <property type="GO annotations" value="0 GO annotations based on evolutionary models"/>
</dbReference>
<dbReference type="PhylomeDB" id="P52943"/>
<dbReference type="TreeFam" id="TF313758"/>
<dbReference type="PathwayCommons" id="P52943"/>
<dbReference type="SignaLink" id="P52943"/>
<dbReference type="SIGNOR" id="P52943"/>
<dbReference type="BioGRID-ORCS" id="1397">
    <property type="hits" value="13 hits in 1150 CRISPR screens"/>
</dbReference>
<dbReference type="CD-CODE" id="FB4E32DD">
    <property type="entry name" value="Presynaptic clusters and postsynaptic densities"/>
</dbReference>
<dbReference type="ChiTaRS" id="CRIP2">
    <property type="organism name" value="human"/>
</dbReference>
<dbReference type="EvolutionaryTrace" id="P52943"/>
<dbReference type="GeneWiki" id="CRIP2"/>
<dbReference type="GenomeRNAi" id="1397"/>
<dbReference type="Pharos" id="P52943">
    <property type="development level" value="Tbio"/>
</dbReference>
<dbReference type="PRO" id="PR:P52943"/>
<dbReference type="Proteomes" id="UP000005640">
    <property type="component" value="Chromosome 14"/>
</dbReference>
<dbReference type="RNAct" id="P52943">
    <property type="molecule type" value="protein"/>
</dbReference>
<dbReference type="Bgee" id="ENSG00000182809">
    <property type="expression patterns" value="Expressed in apex of heart and 183 other cell types or tissues"/>
</dbReference>
<dbReference type="ExpressionAtlas" id="P52943">
    <property type="expression patterns" value="baseline and differential"/>
</dbReference>
<dbReference type="GO" id="GO:0005938">
    <property type="term" value="C:cell cortex"/>
    <property type="evidence" value="ECO:0007669"/>
    <property type="project" value="Ensembl"/>
</dbReference>
<dbReference type="GO" id="GO:0008270">
    <property type="term" value="F:zinc ion binding"/>
    <property type="evidence" value="ECO:0000304"/>
    <property type="project" value="ProtInc"/>
</dbReference>
<dbReference type="GO" id="GO:0030097">
    <property type="term" value="P:hemopoiesis"/>
    <property type="evidence" value="ECO:0007669"/>
    <property type="project" value="Ensembl"/>
</dbReference>
<dbReference type="GO" id="GO:0008284">
    <property type="term" value="P:positive regulation of cell population proliferation"/>
    <property type="evidence" value="ECO:0007669"/>
    <property type="project" value="Ensembl"/>
</dbReference>
<dbReference type="CDD" id="cd09476">
    <property type="entry name" value="LIM1_TLP"/>
    <property type="match status" value="2"/>
</dbReference>
<dbReference type="FunFam" id="2.10.110.10:FF:000025">
    <property type="entry name" value="Cysteine-rich protein 2"/>
    <property type="match status" value="2"/>
</dbReference>
<dbReference type="Gene3D" id="2.10.110.10">
    <property type="entry name" value="Cysteine Rich Protein"/>
    <property type="match status" value="2"/>
</dbReference>
<dbReference type="InterPro" id="IPR001781">
    <property type="entry name" value="Znf_LIM"/>
</dbReference>
<dbReference type="PANTHER" id="PTHR46074:SF2">
    <property type="entry name" value="CYSTEINE-RICH PROTEIN 2"/>
    <property type="match status" value="1"/>
</dbReference>
<dbReference type="PANTHER" id="PTHR46074">
    <property type="entry name" value="CYSTEINE-RICH PROTEIN CRIP FAMILY MEMBER"/>
    <property type="match status" value="1"/>
</dbReference>
<dbReference type="Pfam" id="PF00412">
    <property type="entry name" value="LIM"/>
    <property type="match status" value="2"/>
</dbReference>
<dbReference type="SMART" id="SM00132">
    <property type="entry name" value="LIM"/>
    <property type="match status" value="2"/>
</dbReference>
<dbReference type="SUPFAM" id="SSF57716">
    <property type="entry name" value="Glucocorticoid receptor-like (DNA-binding domain)"/>
    <property type="match status" value="4"/>
</dbReference>
<dbReference type="PROSITE" id="PS00478">
    <property type="entry name" value="LIM_DOMAIN_1"/>
    <property type="match status" value="2"/>
</dbReference>
<dbReference type="PROSITE" id="PS50023">
    <property type="entry name" value="LIM_DOMAIN_2"/>
    <property type="match status" value="2"/>
</dbReference>
<comment type="subunit">
    <text evidence="1">Interacts with TGFB1I1.</text>
</comment>
<comment type="interaction">
    <interactant intactId="EBI-947590">
        <id>P52943</id>
    </interactant>
    <interactant intactId="EBI-73886">
        <id>Q04206</id>
        <label>RELA</label>
    </interactant>
    <organismsDiffer>false</organismsDiffer>
    <experiments>2</experiments>
</comment>
<comment type="alternative products">
    <event type="alternative splicing"/>
    <isoform>
        <id>P52943-1</id>
        <name>1</name>
        <sequence type="displayed"/>
    </isoform>
    <isoform>
        <id>P52943-2</id>
        <name>2</name>
        <sequence type="described" ref="VSP_047074"/>
    </isoform>
</comment>
<comment type="tissue specificity">
    <text>Widespread tissue expression; highest levels in the heart.</text>
</comment>
<sequence>MASKCPKCDKTVYFAEKVSSLGKDWHKFCLKCERCSKTLTPGGHAEHDGKPFCHKPCYATLFGPKGVNIGGAGSYIYEKPLAEGPQVTGPIEVPAARAEERKASGPPKGPSRASSVTTFTGEPNTCPRCSKKVYFAEKVTSLGKDWHRPCLRCERCGKTLTPGGHAEHDGQPYCHKPCYGILFGPKGVNTGAVGSYIYDRDPEGKVQP</sequence>
<gene>
    <name type="primary">CRIP2</name>
    <name type="synonym">CRP2</name>
</gene>
<feature type="chain" id="PRO_0000075710" description="Cysteine-rich protein 2">
    <location>
        <begin position="1"/>
        <end position="208"/>
    </location>
</feature>
<feature type="domain" description="LIM zinc-binding 1" evidence="3">
    <location>
        <begin position="5"/>
        <end position="57"/>
    </location>
</feature>
<feature type="domain" description="LIM zinc-binding 2" evidence="3">
    <location>
        <begin position="126"/>
        <end position="178"/>
    </location>
</feature>
<feature type="region of interest" description="Disordered" evidence="4">
    <location>
        <begin position="98"/>
        <end position="119"/>
    </location>
</feature>
<feature type="modified residue" description="N6-acetyllysine" evidence="2">
    <location>
        <position position="23"/>
    </location>
</feature>
<feature type="modified residue" description="Phosphoserine" evidence="7">
    <location>
        <position position="104"/>
    </location>
</feature>
<feature type="modified residue" description="N6-acetyllysine" evidence="6">
    <location>
        <position position="138"/>
    </location>
</feature>
<feature type="modified residue" description="N6-acetyllysine" evidence="2">
    <location>
        <position position="144"/>
    </location>
</feature>
<feature type="splice variant" id="VSP_047074" description="In isoform 2." evidence="5">
    <original>MASKCPKCDKTVYF</original>
    <variation>MPPHHLLPWLAQVPSAEGELVRLVSRAGGRGACFWPAVTMEMAVAAGCVCKGGGCCHREPSQDHHESQEHRGPLVGSQTCLVHQAEGT</variation>
    <location>
        <begin position="1"/>
        <end position="14"/>
    </location>
</feature>
<feature type="turn" evidence="8">
    <location>
        <begin position="6"/>
        <end position="8"/>
    </location>
</feature>
<feature type="turn" evidence="8">
    <location>
        <begin position="14"/>
        <end position="16"/>
    </location>
</feature>
<feature type="strand" evidence="8">
    <location>
        <begin position="17"/>
        <end position="20"/>
    </location>
</feature>
<feature type="strand" evidence="8">
    <location>
        <begin position="23"/>
        <end position="26"/>
    </location>
</feature>
<feature type="turn" evidence="8">
    <location>
        <begin position="27"/>
        <end position="29"/>
    </location>
</feature>
<feature type="strand" evidence="8">
    <location>
        <begin position="33"/>
        <end position="35"/>
    </location>
</feature>
<feature type="strand" evidence="8">
    <location>
        <begin position="45"/>
        <end position="47"/>
    </location>
</feature>
<feature type="strand" evidence="8">
    <location>
        <begin position="50"/>
        <end position="52"/>
    </location>
</feature>
<feature type="turn" evidence="8">
    <location>
        <begin position="54"/>
        <end position="56"/>
    </location>
</feature>
<feature type="helix" evidence="8">
    <location>
        <begin position="57"/>
        <end position="61"/>
    </location>
</feature>
<organism>
    <name type="scientific">Homo sapiens</name>
    <name type="common">Human</name>
    <dbReference type="NCBI Taxonomy" id="9606"/>
    <lineage>
        <taxon>Eukaryota</taxon>
        <taxon>Metazoa</taxon>
        <taxon>Chordata</taxon>
        <taxon>Craniata</taxon>
        <taxon>Vertebrata</taxon>
        <taxon>Euteleostomi</taxon>
        <taxon>Mammalia</taxon>
        <taxon>Eutheria</taxon>
        <taxon>Euarchontoglires</taxon>
        <taxon>Primates</taxon>
        <taxon>Haplorrhini</taxon>
        <taxon>Catarrhini</taxon>
        <taxon>Hominidae</taxon>
        <taxon>Homo</taxon>
    </lineage>
</organism>
<reference key="1">
    <citation type="journal article" date="1996" name="Genomics">
        <title>Human ESP1/CRP2, a member of the LIM domain protein family: characterization of the cDNA and assignment of the gene locus to chromosome 14q32.3.</title>
        <authorList>
            <person name="Karim M.A."/>
            <person name="Ohta K."/>
            <person name="Egashira M."/>
            <person name="Jinno Y."/>
            <person name="Niikawa N."/>
            <person name="Matsuda I."/>
            <person name="Indo Y."/>
        </authorList>
    </citation>
    <scope>NUCLEOTIDE SEQUENCE [MRNA] (ISOFORM 1)</scope>
</reference>
<reference key="2">
    <citation type="journal article" date="1996" name="Biochem. Mol. Biol. Int.">
        <title>A novel cDNA encoding for a LIM domain protein located at human chromosome 14q32 as a candidate for leukemic translocation.</title>
        <authorList>
            <person name="Tsui S.K.W."/>
            <person name="Chan P.P.K."/>
            <person name="Cheuk C.W."/>
            <person name="Liew C.C."/>
            <person name="Waye M.M.Y."/>
            <person name="Fung K.P."/>
            <person name="Lee C.Y."/>
        </authorList>
    </citation>
    <scope>NUCLEOTIDE SEQUENCE [MRNA] (ISOFORM 1)</scope>
    <source>
        <tissue>Heart</tissue>
    </source>
</reference>
<reference key="3">
    <citation type="submission" date="2004-10" db="EMBL/GenBank/DDBJ databases">
        <title>Cloning of human full-length CDSs in BD Creator(TM) system donor vector.</title>
        <authorList>
            <person name="Kalnine N."/>
            <person name="Chen X."/>
            <person name="Rolfs A."/>
            <person name="Halleck A."/>
            <person name="Hines L."/>
            <person name="Eisenstein S."/>
            <person name="Koundinya M."/>
            <person name="Raphael J."/>
            <person name="Moreira D."/>
            <person name="Kelley T."/>
            <person name="LaBaer J."/>
            <person name="Lin Y."/>
            <person name="Phelan M."/>
            <person name="Farmer A."/>
        </authorList>
    </citation>
    <scope>NUCLEOTIDE SEQUENCE [LARGE SCALE MRNA] (ISOFORM 1)</scope>
</reference>
<reference key="4">
    <citation type="journal article" date="2004" name="Nat. Genet.">
        <title>Complete sequencing and characterization of 21,243 full-length human cDNAs.</title>
        <authorList>
            <person name="Ota T."/>
            <person name="Suzuki Y."/>
            <person name="Nishikawa T."/>
            <person name="Otsuki T."/>
            <person name="Sugiyama T."/>
            <person name="Irie R."/>
            <person name="Wakamatsu A."/>
            <person name="Hayashi K."/>
            <person name="Sato H."/>
            <person name="Nagai K."/>
            <person name="Kimura K."/>
            <person name="Makita H."/>
            <person name="Sekine M."/>
            <person name="Obayashi M."/>
            <person name="Nishi T."/>
            <person name="Shibahara T."/>
            <person name="Tanaka T."/>
            <person name="Ishii S."/>
            <person name="Yamamoto J."/>
            <person name="Saito K."/>
            <person name="Kawai Y."/>
            <person name="Isono Y."/>
            <person name="Nakamura Y."/>
            <person name="Nagahari K."/>
            <person name="Murakami K."/>
            <person name="Yasuda T."/>
            <person name="Iwayanagi T."/>
            <person name="Wagatsuma M."/>
            <person name="Shiratori A."/>
            <person name="Sudo H."/>
            <person name="Hosoiri T."/>
            <person name="Kaku Y."/>
            <person name="Kodaira H."/>
            <person name="Kondo H."/>
            <person name="Sugawara M."/>
            <person name="Takahashi M."/>
            <person name="Kanda K."/>
            <person name="Yokoi T."/>
            <person name="Furuya T."/>
            <person name="Kikkawa E."/>
            <person name="Omura Y."/>
            <person name="Abe K."/>
            <person name="Kamihara K."/>
            <person name="Katsuta N."/>
            <person name="Sato K."/>
            <person name="Tanikawa M."/>
            <person name="Yamazaki M."/>
            <person name="Ninomiya K."/>
            <person name="Ishibashi T."/>
            <person name="Yamashita H."/>
            <person name="Murakawa K."/>
            <person name="Fujimori K."/>
            <person name="Tanai H."/>
            <person name="Kimata M."/>
            <person name="Watanabe M."/>
            <person name="Hiraoka S."/>
            <person name="Chiba Y."/>
            <person name="Ishida S."/>
            <person name="Ono Y."/>
            <person name="Takiguchi S."/>
            <person name="Watanabe S."/>
            <person name="Yosida M."/>
            <person name="Hotuta T."/>
            <person name="Kusano J."/>
            <person name="Kanehori K."/>
            <person name="Takahashi-Fujii A."/>
            <person name="Hara H."/>
            <person name="Tanase T.-O."/>
            <person name="Nomura Y."/>
            <person name="Togiya S."/>
            <person name="Komai F."/>
            <person name="Hara R."/>
            <person name="Takeuchi K."/>
            <person name="Arita M."/>
            <person name="Imose N."/>
            <person name="Musashino K."/>
            <person name="Yuuki H."/>
            <person name="Oshima A."/>
            <person name="Sasaki N."/>
            <person name="Aotsuka S."/>
            <person name="Yoshikawa Y."/>
            <person name="Matsunawa H."/>
            <person name="Ichihara T."/>
            <person name="Shiohata N."/>
            <person name="Sano S."/>
            <person name="Moriya S."/>
            <person name="Momiyama H."/>
            <person name="Satoh N."/>
            <person name="Takami S."/>
            <person name="Terashima Y."/>
            <person name="Suzuki O."/>
            <person name="Nakagawa S."/>
            <person name="Senoh A."/>
            <person name="Mizoguchi H."/>
            <person name="Goto Y."/>
            <person name="Shimizu F."/>
            <person name="Wakebe H."/>
            <person name="Hishigaki H."/>
            <person name="Watanabe T."/>
            <person name="Sugiyama A."/>
            <person name="Takemoto M."/>
            <person name="Kawakami B."/>
            <person name="Yamazaki M."/>
            <person name="Watanabe K."/>
            <person name="Kumagai A."/>
            <person name="Itakura S."/>
            <person name="Fukuzumi Y."/>
            <person name="Fujimori Y."/>
            <person name="Komiyama M."/>
            <person name="Tashiro H."/>
            <person name="Tanigami A."/>
            <person name="Fujiwara T."/>
            <person name="Ono T."/>
            <person name="Yamada K."/>
            <person name="Fujii Y."/>
            <person name="Ozaki K."/>
            <person name="Hirao M."/>
            <person name="Ohmori Y."/>
            <person name="Kawabata A."/>
            <person name="Hikiji T."/>
            <person name="Kobatake N."/>
            <person name="Inagaki H."/>
            <person name="Ikema Y."/>
            <person name="Okamoto S."/>
            <person name="Okitani R."/>
            <person name="Kawakami T."/>
            <person name="Noguchi S."/>
            <person name="Itoh T."/>
            <person name="Shigeta K."/>
            <person name="Senba T."/>
            <person name="Matsumura K."/>
            <person name="Nakajima Y."/>
            <person name="Mizuno T."/>
            <person name="Morinaga M."/>
            <person name="Sasaki M."/>
            <person name="Togashi T."/>
            <person name="Oyama M."/>
            <person name="Hata H."/>
            <person name="Watanabe M."/>
            <person name="Komatsu T."/>
            <person name="Mizushima-Sugano J."/>
            <person name="Satoh T."/>
            <person name="Shirai Y."/>
            <person name="Takahashi Y."/>
            <person name="Nakagawa K."/>
            <person name="Okumura K."/>
            <person name="Nagase T."/>
            <person name="Nomura N."/>
            <person name="Kikuchi H."/>
            <person name="Masuho Y."/>
            <person name="Yamashita R."/>
            <person name="Nakai K."/>
            <person name="Yada T."/>
            <person name="Nakamura Y."/>
            <person name="Ohara O."/>
            <person name="Isogai T."/>
            <person name="Sugano S."/>
        </authorList>
    </citation>
    <scope>NUCLEOTIDE SEQUENCE [LARGE SCALE MRNA] (ISOFORMS 1 AND 2)</scope>
    <source>
        <tissue>Lung</tissue>
        <tissue>Pericardium</tissue>
    </source>
</reference>
<reference key="5">
    <citation type="journal article" date="2003" name="Nature">
        <title>The DNA sequence and analysis of human chromosome 14.</title>
        <authorList>
            <person name="Heilig R."/>
            <person name="Eckenberg R."/>
            <person name="Petit J.-L."/>
            <person name="Fonknechten N."/>
            <person name="Da Silva C."/>
            <person name="Cattolico L."/>
            <person name="Levy M."/>
            <person name="Barbe V."/>
            <person name="De Berardinis V."/>
            <person name="Ureta-Vidal A."/>
            <person name="Pelletier E."/>
            <person name="Vico V."/>
            <person name="Anthouard V."/>
            <person name="Rowen L."/>
            <person name="Madan A."/>
            <person name="Qin S."/>
            <person name="Sun H."/>
            <person name="Du H."/>
            <person name="Pepin K."/>
            <person name="Artiguenave F."/>
            <person name="Robert C."/>
            <person name="Cruaud C."/>
            <person name="Bruels T."/>
            <person name="Jaillon O."/>
            <person name="Friedlander L."/>
            <person name="Samson G."/>
            <person name="Brottier P."/>
            <person name="Cure S."/>
            <person name="Segurens B."/>
            <person name="Aniere F."/>
            <person name="Samain S."/>
            <person name="Crespeau H."/>
            <person name="Abbasi N."/>
            <person name="Aiach N."/>
            <person name="Boscus D."/>
            <person name="Dickhoff R."/>
            <person name="Dors M."/>
            <person name="Dubois I."/>
            <person name="Friedman C."/>
            <person name="Gouyvenoux M."/>
            <person name="James R."/>
            <person name="Madan A."/>
            <person name="Mairey-Estrada B."/>
            <person name="Mangenot S."/>
            <person name="Martins N."/>
            <person name="Menard M."/>
            <person name="Oztas S."/>
            <person name="Ratcliffe A."/>
            <person name="Shaffer T."/>
            <person name="Trask B."/>
            <person name="Vacherie B."/>
            <person name="Bellemere C."/>
            <person name="Belser C."/>
            <person name="Besnard-Gonnet M."/>
            <person name="Bartol-Mavel D."/>
            <person name="Boutard M."/>
            <person name="Briez-Silla S."/>
            <person name="Combette S."/>
            <person name="Dufosse-Laurent V."/>
            <person name="Ferron C."/>
            <person name="Lechaplais C."/>
            <person name="Louesse C."/>
            <person name="Muselet D."/>
            <person name="Magdelenat G."/>
            <person name="Pateau E."/>
            <person name="Petit E."/>
            <person name="Sirvain-Trukniewicz P."/>
            <person name="Trybou A."/>
            <person name="Vega-Czarny N."/>
            <person name="Bataille E."/>
            <person name="Bluet E."/>
            <person name="Bordelais I."/>
            <person name="Dubois M."/>
            <person name="Dumont C."/>
            <person name="Guerin T."/>
            <person name="Haffray S."/>
            <person name="Hammadi R."/>
            <person name="Muanga J."/>
            <person name="Pellouin V."/>
            <person name="Robert D."/>
            <person name="Wunderle E."/>
            <person name="Gauguet G."/>
            <person name="Roy A."/>
            <person name="Sainte-Marthe L."/>
            <person name="Verdier J."/>
            <person name="Verdier-Discala C."/>
            <person name="Hillier L.W."/>
            <person name="Fulton L."/>
            <person name="McPherson J."/>
            <person name="Matsuda F."/>
            <person name="Wilson R."/>
            <person name="Scarpelli C."/>
            <person name="Gyapay G."/>
            <person name="Wincker P."/>
            <person name="Saurin W."/>
            <person name="Quetier F."/>
            <person name="Waterston R."/>
            <person name="Hood L."/>
            <person name="Weissenbach J."/>
        </authorList>
    </citation>
    <scope>NUCLEOTIDE SEQUENCE [LARGE SCALE GENOMIC DNA]</scope>
</reference>
<reference key="6">
    <citation type="journal article" date="2004" name="Genome Res.">
        <title>The status, quality, and expansion of the NIH full-length cDNA project: the Mammalian Gene Collection (MGC).</title>
        <authorList>
            <consortium name="The MGC Project Team"/>
        </authorList>
    </citation>
    <scope>NUCLEOTIDE SEQUENCE [LARGE SCALE MRNA] (ISOFORM 1)</scope>
    <source>
        <tissue>Lung</tissue>
    </source>
</reference>
<reference key="7">
    <citation type="journal article" date="2008" name="Proc. Natl. Acad. Sci. U.S.A.">
        <title>A quantitative atlas of mitotic phosphorylation.</title>
        <authorList>
            <person name="Dephoure N."/>
            <person name="Zhou C."/>
            <person name="Villen J."/>
            <person name="Beausoleil S.A."/>
            <person name="Bakalarski C.E."/>
            <person name="Elledge S.J."/>
            <person name="Gygi S.P."/>
        </authorList>
    </citation>
    <scope>IDENTIFICATION BY MASS SPECTROMETRY [LARGE SCALE ANALYSIS]</scope>
    <source>
        <tissue>Cervix carcinoma</tissue>
    </source>
</reference>
<reference key="8">
    <citation type="journal article" date="2009" name="Sci. Signal.">
        <title>Quantitative phosphoproteomic analysis of T cell receptor signaling reveals system-wide modulation of protein-protein interactions.</title>
        <authorList>
            <person name="Mayya V."/>
            <person name="Lundgren D.H."/>
            <person name="Hwang S.-I."/>
            <person name="Rezaul K."/>
            <person name="Wu L."/>
            <person name="Eng J.K."/>
            <person name="Rodionov V."/>
            <person name="Han D.K."/>
        </authorList>
    </citation>
    <scope>IDENTIFICATION BY MASS SPECTROMETRY [LARGE SCALE ANALYSIS]</scope>
    <source>
        <tissue>Leukemic T-cell</tissue>
    </source>
</reference>
<reference key="9">
    <citation type="journal article" date="2009" name="Science">
        <title>Lysine acetylation targets protein complexes and co-regulates major cellular functions.</title>
        <authorList>
            <person name="Choudhary C."/>
            <person name="Kumar C."/>
            <person name="Gnad F."/>
            <person name="Nielsen M.L."/>
            <person name="Rehman M."/>
            <person name="Walther T.C."/>
            <person name="Olsen J.V."/>
            <person name="Mann M."/>
        </authorList>
    </citation>
    <scope>ACETYLATION [LARGE SCALE ANALYSIS] AT LYS-138</scope>
    <scope>IDENTIFICATION BY MASS SPECTROMETRY [LARGE SCALE ANALYSIS]</scope>
</reference>
<reference key="10">
    <citation type="journal article" date="2010" name="Sci. Signal.">
        <title>Quantitative phosphoproteomics reveals widespread full phosphorylation site occupancy during mitosis.</title>
        <authorList>
            <person name="Olsen J.V."/>
            <person name="Vermeulen M."/>
            <person name="Santamaria A."/>
            <person name="Kumar C."/>
            <person name="Miller M.L."/>
            <person name="Jensen L.J."/>
            <person name="Gnad F."/>
            <person name="Cox J."/>
            <person name="Jensen T.S."/>
            <person name="Nigg E.A."/>
            <person name="Brunak S."/>
            <person name="Mann M."/>
        </authorList>
    </citation>
    <scope>IDENTIFICATION BY MASS SPECTROMETRY [LARGE SCALE ANALYSIS]</scope>
    <source>
        <tissue>Cervix carcinoma</tissue>
    </source>
</reference>
<reference key="11">
    <citation type="journal article" date="2011" name="BMC Syst. Biol.">
        <title>Initial characterization of the human central proteome.</title>
        <authorList>
            <person name="Burkard T.R."/>
            <person name="Planyavsky M."/>
            <person name="Kaupe I."/>
            <person name="Breitwieser F.P."/>
            <person name="Buerckstuemmer T."/>
            <person name="Bennett K.L."/>
            <person name="Superti-Furga G."/>
            <person name="Colinge J."/>
        </authorList>
    </citation>
    <scope>IDENTIFICATION BY MASS SPECTROMETRY [LARGE SCALE ANALYSIS]</scope>
</reference>
<reference key="12">
    <citation type="journal article" date="2013" name="J. Proteome Res.">
        <title>Toward a comprehensive characterization of a human cancer cell phosphoproteome.</title>
        <authorList>
            <person name="Zhou H."/>
            <person name="Di Palma S."/>
            <person name="Preisinger C."/>
            <person name="Peng M."/>
            <person name="Polat A.N."/>
            <person name="Heck A.J."/>
            <person name="Mohammed S."/>
        </authorList>
    </citation>
    <scope>IDENTIFICATION BY MASS SPECTROMETRY [LARGE SCALE ANALYSIS]</scope>
    <source>
        <tissue>Cervix carcinoma</tissue>
    </source>
</reference>
<reference key="13">
    <citation type="journal article" date="2014" name="J. Proteomics">
        <title>An enzyme assisted RP-RPLC approach for in-depth analysis of human liver phosphoproteome.</title>
        <authorList>
            <person name="Bian Y."/>
            <person name="Song C."/>
            <person name="Cheng K."/>
            <person name="Dong M."/>
            <person name="Wang F."/>
            <person name="Huang J."/>
            <person name="Sun D."/>
            <person name="Wang L."/>
            <person name="Ye M."/>
            <person name="Zou H."/>
        </authorList>
    </citation>
    <scope>PHOSPHORYLATION [LARGE SCALE ANALYSIS] AT SER-104</scope>
    <scope>IDENTIFICATION BY MASS SPECTROMETRY [LARGE SCALE ANALYSIS]</scope>
    <source>
        <tissue>Liver</tissue>
    </source>
</reference>
<reference key="14">
    <citation type="submission" date="2006-01" db="PDB data bank">
        <title>Solution structure of the LIM domain of human cysteine-rich protein 2.</title>
        <authorList>
            <consortium name="RIKEN structural genomics initiative (RSGI)"/>
        </authorList>
    </citation>
    <scope>STRUCTURE BY NMR OF 1-63</scope>
</reference>